<comment type="function">
    <text evidence="1">Plays an important role in the de novo pathway of purine nucleotide biosynthesis. Catalyzes the first committed step in the biosynthesis of AMP from IMP.</text>
</comment>
<comment type="catalytic activity">
    <reaction evidence="1">
        <text>IMP + L-aspartate + GTP = N(6)-(1,2-dicarboxyethyl)-AMP + GDP + phosphate + 2 H(+)</text>
        <dbReference type="Rhea" id="RHEA:15753"/>
        <dbReference type="ChEBI" id="CHEBI:15378"/>
        <dbReference type="ChEBI" id="CHEBI:29991"/>
        <dbReference type="ChEBI" id="CHEBI:37565"/>
        <dbReference type="ChEBI" id="CHEBI:43474"/>
        <dbReference type="ChEBI" id="CHEBI:57567"/>
        <dbReference type="ChEBI" id="CHEBI:58053"/>
        <dbReference type="ChEBI" id="CHEBI:58189"/>
        <dbReference type="EC" id="6.3.4.4"/>
    </reaction>
</comment>
<comment type="cofactor">
    <cofactor evidence="1">
        <name>Mg(2+)</name>
        <dbReference type="ChEBI" id="CHEBI:18420"/>
    </cofactor>
    <text evidence="1">Binds 1 Mg(2+) ion per subunit.</text>
</comment>
<comment type="pathway">
    <text evidence="1">Purine metabolism; AMP biosynthesis via de novo pathway; AMP from IMP: step 1/2.</text>
</comment>
<comment type="subunit">
    <text evidence="1">Homodimer.</text>
</comment>
<comment type="subcellular location">
    <subcellularLocation>
        <location evidence="1">Cytoplasm</location>
    </subcellularLocation>
</comment>
<comment type="similarity">
    <text evidence="1">Belongs to the adenylosuccinate synthetase family.</text>
</comment>
<reference key="1">
    <citation type="journal article" date="2006" name="PLoS Genet.">
        <title>Who ate whom? Adaptive Helicobacter genomic changes that accompanied a host jump from early humans to large felines.</title>
        <authorList>
            <person name="Eppinger M."/>
            <person name="Baar C."/>
            <person name="Linz B."/>
            <person name="Raddatz G."/>
            <person name="Lanz C."/>
            <person name="Keller H."/>
            <person name="Morelli G."/>
            <person name="Gressmann H."/>
            <person name="Achtman M."/>
            <person name="Schuster S.C."/>
        </authorList>
    </citation>
    <scope>NUCLEOTIDE SEQUENCE [LARGE SCALE GENOMIC DNA]</scope>
    <source>
        <strain>Sheeba</strain>
    </source>
</reference>
<protein>
    <recommendedName>
        <fullName evidence="1">Adenylosuccinate synthetase</fullName>
        <shortName evidence="1">AMPSase</shortName>
        <shortName evidence="1">AdSS</shortName>
        <ecNumber evidence="1">6.3.4.4</ecNumber>
    </recommendedName>
    <alternativeName>
        <fullName evidence="1">IMP--aspartate ligase</fullName>
    </alternativeName>
</protein>
<keyword id="KW-0963">Cytoplasm</keyword>
<keyword id="KW-0342">GTP-binding</keyword>
<keyword id="KW-0436">Ligase</keyword>
<keyword id="KW-0460">Magnesium</keyword>
<keyword id="KW-0479">Metal-binding</keyword>
<keyword id="KW-0547">Nucleotide-binding</keyword>
<keyword id="KW-0658">Purine biosynthesis</keyword>
<feature type="chain" id="PRO_1000000836" description="Adenylosuccinate synthetase">
    <location>
        <begin position="1"/>
        <end position="411"/>
    </location>
</feature>
<feature type="active site" description="Proton acceptor" evidence="1">
    <location>
        <position position="12"/>
    </location>
</feature>
<feature type="active site" description="Proton donor" evidence="1">
    <location>
        <position position="40"/>
    </location>
</feature>
<feature type="binding site" evidence="1">
    <location>
        <begin position="11"/>
        <end position="17"/>
    </location>
    <ligand>
        <name>GTP</name>
        <dbReference type="ChEBI" id="CHEBI:37565"/>
    </ligand>
</feature>
<feature type="binding site" description="in other chain" evidence="1">
    <location>
        <begin position="12"/>
        <end position="15"/>
    </location>
    <ligand>
        <name>IMP</name>
        <dbReference type="ChEBI" id="CHEBI:58053"/>
        <note>ligand shared between dimeric partners</note>
    </ligand>
</feature>
<feature type="binding site" evidence="1">
    <location>
        <position position="12"/>
    </location>
    <ligand>
        <name>Mg(2+)</name>
        <dbReference type="ChEBI" id="CHEBI:18420"/>
    </ligand>
</feature>
<feature type="binding site" description="in other chain" evidence="1">
    <location>
        <begin position="37"/>
        <end position="40"/>
    </location>
    <ligand>
        <name>IMP</name>
        <dbReference type="ChEBI" id="CHEBI:58053"/>
        <note>ligand shared between dimeric partners</note>
    </ligand>
</feature>
<feature type="binding site" evidence="1">
    <location>
        <begin position="39"/>
        <end position="41"/>
    </location>
    <ligand>
        <name>GTP</name>
        <dbReference type="ChEBI" id="CHEBI:37565"/>
    </ligand>
</feature>
<feature type="binding site" evidence="1">
    <location>
        <position position="39"/>
    </location>
    <ligand>
        <name>Mg(2+)</name>
        <dbReference type="ChEBI" id="CHEBI:18420"/>
    </ligand>
</feature>
<feature type="binding site" description="in other chain" evidence="1">
    <location>
        <position position="121"/>
    </location>
    <ligand>
        <name>IMP</name>
        <dbReference type="ChEBI" id="CHEBI:58053"/>
        <note>ligand shared between dimeric partners</note>
    </ligand>
</feature>
<feature type="binding site" evidence="1">
    <location>
        <position position="135"/>
    </location>
    <ligand>
        <name>IMP</name>
        <dbReference type="ChEBI" id="CHEBI:58053"/>
        <note>ligand shared between dimeric partners</note>
    </ligand>
</feature>
<feature type="binding site" description="in other chain" evidence="1">
    <location>
        <position position="215"/>
    </location>
    <ligand>
        <name>IMP</name>
        <dbReference type="ChEBI" id="CHEBI:58053"/>
        <note>ligand shared between dimeric partners</note>
    </ligand>
</feature>
<feature type="binding site" description="in other chain" evidence="1">
    <location>
        <position position="230"/>
    </location>
    <ligand>
        <name>IMP</name>
        <dbReference type="ChEBI" id="CHEBI:58053"/>
        <note>ligand shared between dimeric partners</note>
    </ligand>
</feature>
<feature type="binding site" evidence="1">
    <location>
        <begin position="290"/>
        <end position="296"/>
    </location>
    <ligand>
        <name>substrate</name>
    </ligand>
</feature>
<feature type="binding site" description="in other chain" evidence="1">
    <location>
        <position position="294"/>
    </location>
    <ligand>
        <name>IMP</name>
        <dbReference type="ChEBI" id="CHEBI:58053"/>
        <note>ligand shared between dimeric partners</note>
    </ligand>
</feature>
<feature type="binding site" evidence="1">
    <location>
        <position position="296"/>
    </location>
    <ligand>
        <name>GTP</name>
        <dbReference type="ChEBI" id="CHEBI:37565"/>
    </ligand>
</feature>
<feature type="binding site" evidence="1">
    <location>
        <begin position="322"/>
        <end position="324"/>
    </location>
    <ligand>
        <name>GTP</name>
        <dbReference type="ChEBI" id="CHEBI:37565"/>
    </ligand>
</feature>
<feature type="binding site" evidence="1">
    <location>
        <begin position="400"/>
        <end position="402"/>
    </location>
    <ligand>
        <name>GTP</name>
        <dbReference type="ChEBI" id="CHEBI:37565"/>
    </ligand>
</feature>
<dbReference type="EC" id="6.3.4.4" evidence="1"/>
<dbReference type="EMBL" id="AM260522">
    <property type="protein sequence ID" value="CAK00091.1"/>
    <property type="molecule type" value="Genomic_DNA"/>
</dbReference>
<dbReference type="RefSeq" id="WP_011578181.1">
    <property type="nucleotide sequence ID" value="NC_008229.1"/>
</dbReference>
<dbReference type="SMR" id="Q17W85"/>
<dbReference type="STRING" id="382638.Hac_1353"/>
<dbReference type="GeneID" id="31758669"/>
<dbReference type="KEGG" id="hac:Hac_1353"/>
<dbReference type="eggNOG" id="COG0104">
    <property type="taxonomic scope" value="Bacteria"/>
</dbReference>
<dbReference type="HOGENOM" id="CLU_029848_0_0_7"/>
<dbReference type="OrthoDB" id="9807553at2"/>
<dbReference type="BioCyc" id="HACI382638:HAC_RS05815-MONOMER"/>
<dbReference type="UniPathway" id="UPA00075">
    <property type="reaction ID" value="UER00335"/>
</dbReference>
<dbReference type="Proteomes" id="UP000000775">
    <property type="component" value="Chromosome"/>
</dbReference>
<dbReference type="GO" id="GO:0005737">
    <property type="term" value="C:cytoplasm"/>
    <property type="evidence" value="ECO:0007669"/>
    <property type="project" value="UniProtKB-SubCell"/>
</dbReference>
<dbReference type="GO" id="GO:0004019">
    <property type="term" value="F:adenylosuccinate synthase activity"/>
    <property type="evidence" value="ECO:0007669"/>
    <property type="project" value="UniProtKB-UniRule"/>
</dbReference>
<dbReference type="GO" id="GO:0005525">
    <property type="term" value="F:GTP binding"/>
    <property type="evidence" value="ECO:0007669"/>
    <property type="project" value="UniProtKB-UniRule"/>
</dbReference>
<dbReference type="GO" id="GO:0000287">
    <property type="term" value="F:magnesium ion binding"/>
    <property type="evidence" value="ECO:0007669"/>
    <property type="project" value="UniProtKB-UniRule"/>
</dbReference>
<dbReference type="GO" id="GO:0044208">
    <property type="term" value="P:'de novo' AMP biosynthetic process"/>
    <property type="evidence" value="ECO:0007669"/>
    <property type="project" value="UniProtKB-UniRule"/>
</dbReference>
<dbReference type="GO" id="GO:0046040">
    <property type="term" value="P:IMP metabolic process"/>
    <property type="evidence" value="ECO:0007669"/>
    <property type="project" value="TreeGrafter"/>
</dbReference>
<dbReference type="CDD" id="cd03108">
    <property type="entry name" value="AdSS"/>
    <property type="match status" value="1"/>
</dbReference>
<dbReference type="FunFam" id="1.10.300.10:FF:000001">
    <property type="entry name" value="Adenylosuccinate synthetase"/>
    <property type="match status" value="1"/>
</dbReference>
<dbReference type="FunFam" id="3.90.170.10:FF:000001">
    <property type="entry name" value="Adenylosuccinate synthetase"/>
    <property type="match status" value="1"/>
</dbReference>
<dbReference type="Gene3D" id="3.40.440.10">
    <property type="entry name" value="Adenylosuccinate Synthetase, subunit A, domain 1"/>
    <property type="match status" value="1"/>
</dbReference>
<dbReference type="Gene3D" id="1.10.300.10">
    <property type="entry name" value="Adenylosuccinate Synthetase, subunit A, domain 2"/>
    <property type="match status" value="1"/>
</dbReference>
<dbReference type="Gene3D" id="3.90.170.10">
    <property type="entry name" value="Adenylosuccinate Synthetase, subunit A, domain 3"/>
    <property type="match status" value="1"/>
</dbReference>
<dbReference type="HAMAP" id="MF_00011">
    <property type="entry name" value="Adenylosucc_synth"/>
    <property type="match status" value="1"/>
</dbReference>
<dbReference type="InterPro" id="IPR018220">
    <property type="entry name" value="Adenylosuccin_syn_GTP-bd"/>
</dbReference>
<dbReference type="InterPro" id="IPR033128">
    <property type="entry name" value="Adenylosuccin_syn_Lys_AS"/>
</dbReference>
<dbReference type="InterPro" id="IPR042109">
    <property type="entry name" value="Adenylosuccinate_synth_dom1"/>
</dbReference>
<dbReference type="InterPro" id="IPR042110">
    <property type="entry name" value="Adenylosuccinate_synth_dom2"/>
</dbReference>
<dbReference type="InterPro" id="IPR042111">
    <property type="entry name" value="Adenylosuccinate_synth_dom3"/>
</dbReference>
<dbReference type="InterPro" id="IPR001114">
    <property type="entry name" value="Adenylosuccinate_synthetase"/>
</dbReference>
<dbReference type="InterPro" id="IPR027417">
    <property type="entry name" value="P-loop_NTPase"/>
</dbReference>
<dbReference type="NCBIfam" id="NF002223">
    <property type="entry name" value="PRK01117.1"/>
    <property type="match status" value="1"/>
</dbReference>
<dbReference type="NCBIfam" id="TIGR00184">
    <property type="entry name" value="purA"/>
    <property type="match status" value="1"/>
</dbReference>
<dbReference type="PANTHER" id="PTHR11846">
    <property type="entry name" value="ADENYLOSUCCINATE SYNTHETASE"/>
    <property type="match status" value="1"/>
</dbReference>
<dbReference type="PANTHER" id="PTHR11846:SF0">
    <property type="entry name" value="ADENYLOSUCCINATE SYNTHETASE"/>
    <property type="match status" value="1"/>
</dbReference>
<dbReference type="Pfam" id="PF00709">
    <property type="entry name" value="Adenylsucc_synt"/>
    <property type="match status" value="1"/>
</dbReference>
<dbReference type="SMART" id="SM00788">
    <property type="entry name" value="Adenylsucc_synt"/>
    <property type="match status" value="1"/>
</dbReference>
<dbReference type="SUPFAM" id="SSF52540">
    <property type="entry name" value="P-loop containing nucleoside triphosphate hydrolases"/>
    <property type="match status" value="1"/>
</dbReference>
<dbReference type="PROSITE" id="PS01266">
    <property type="entry name" value="ADENYLOSUCCIN_SYN_1"/>
    <property type="match status" value="1"/>
</dbReference>
<dbReference type="PROSITE" id="PS00513">
    <property type="entry name" value="ADENYLOSUCCIN_SYN_2"/>
    <property type="match status" value="1"/>
</dbReference>
<proteinExistence type="inferred from homology"/>
<accession>Q17W85</accession>
<evidence type="ECO:0000255" key="1">
    <source>
        <dbReference type="HAMAP-Rule" id="MF_00011"/>
    </source>
</evidence>
<sequence>MADVVVGIQWGDEGKGKIVDRIAKDYDFVVRYQGGHNAGHTIVHKGVKHSLHLMPSGVLYSQCKNIISSAVVVSVKDLCEEISMFENLENRLFVSDRAHVILPYHVQKDAFKEKSQNIGTTKKGIGPCYEDKMARSGIRMGDLLDDRILEEKLKVHFKAIEPFKEAYDLNETYEKDLREYFEQYAPKIRPFIKDTTSMLIEANQKGEKILLEGAQGTLLDIDLGTYPFVTSSNTTSASACVSTGLNPKAINEIIGITKAYSTRVGNGPFPSEDTTPMGDHLRIGGAEFGTTTKRPRRCGWLDLVALKYACALNGCTQLALMKLDVLDGINEIKVCVAYERRGEKLETFPSDLKDCVPIYQTFKGWEKSVGVRKLDDLEQNTREYIRFIEEEVGVKIRLISTSPEREDTIFL</sequence>
<gene>
    <name evidence="1" type="primary">purA</name>
    <name type="ordered locus">Hac_1353</name>
</gene>
<organism>
    <name type="scientific">Helicobacter acinonychis (strain Sheeba)</name>
    <dbReference type="NCBI Taxonomy" id="382638"/>
    <lineage>
        <taxon>Bacteria</taxon>
        <taxon>Pseudomonadati</taxon>
        <taxon>Campylobacterota</taxon>
        <taxon>Epsilonproteobacteria</taxon>
        <taxon>Campylobacterales</taxon>
        <taxon>Helicobacteraceae</taxon>
        <taxon>Helicobacter</taxon>
    </lineage>
</organism>
<name>PURA_HELAH</name>